<comment type="function">
    <text evidence="2 5 7 8 10">Scaffold protein in the commander complex that is essential for endosomal recycling of transmembrane cargos; the commander complex is composed of the CCC subcomplex and the retriever subcomplex (PubMed:37172566, PubMed:38459129). May modulate activity of cullin-RING E3 ubiquitin ligase (CRL) complexes (PubMed:21778237). May down-regulate activation of NF-kappa-B (PubMed:15799966). Modulates Na(+) transport in epithelial cells by regulation of apical cell surface expression of amiloride-sensitive sodium channel (ENaC) subunits (PubMed:23637203).</text>
</comment>
<comment type="subunit">
    <text evidence="2 3 4 5 6 7 8">Component of the commander complex consisting of the CCC subcomplex and the retriever subcomplex (PubMed:37172566, PubMed:38459129, PubMed:25355947, PubMed:15799966). Component of the CCC (COMMD/CCDC22/CCDC93) subcomplex consisting of COMMD1, COMMD2, COMMD3, COMMD4, COMMD5, COMMD6, COMMD7, COMMD8, COMMD9, COMMD10, CCDC22 and CCDC93; within the complex forms a heterodimer with COMMD2 (PubMed:37172566, PubMed:38459129, PubMed:15799966, PubMed:23563313, PubMed:25355947). Interacts with NFKB1/p105 (PubMed:15799966). Interacts with CCDC22, CCDC93, SCNN1B, CUL3, CUL4A, CUL4B, CUL5 (PubMed:21778237, PubMed:23637203, PubMed:23563313, PubMed:25355947).</text>
</comment>
<comment type="interaction">
    <interactant intactId="EBI-714979">
        <id>Q9UBI1</id>
    </interactant>
    <interactant intactId="EBI-3943153">
        <id>O60826</id>
        <label>CCDC22</label>
    </interactant>
    <organismsDiffer>false</organismsDiffer>
    <experiments>13</experiments>
</comment>
<comment type="interaction">
    <interactant intactId="EBI-714979">
        <id>Q9UBI1</id>
    </interactant>
    <interactant intactId="EBI-1104769">
        <id>Q567U6</id>
        <label>CCDC93</label>
    </interactant>
    <organismsDiffer>false</organismsDiffer>
    <experiments>7</experiments>
</comment>
<comment type="interaction">
    <interactant intactId="EBI-714979">
        <id>Q9UBI1</id>
    </interactant>
    <interactant intactId="EBI-1550112">
        <id>Q8N668</id>
        <label>COMMD1</label>
    </interactant>
    <organismsDiffer>false</organismsDiffer>
    <experiments>11</experiments>
</comment>
<comment type="interaction">
    <interactant intactId="EBI-714979">
        <id>Q9UBI1</id>
    </interactant>
    <interactant intactId="EBI-1550220">
        <id>Q86X83</id>
        <label>COMMD2</label>
    </interactant>
    <organismsDiffer>false</organismsDiffer>
    <experiments>10</experiments>
</comment>
<comment type="interaction">
    <interactant intactId="EBI-714979">
        <id>Q9UBI1</id>
    </interactant>
    <interactant intactId="EBI-725694">
        <id>Q9NX08</id>
        <label>COMMD8</label>
    </interactant>
    <organismsDiffer>false</organismsDiffer>
    <experiments>7</experiments>
</comment>
<comment type="interaction">
    <interactant intactId="EBI-714979">
        <id>Q9UBI1</id>
    </interactant>
    <interactant intactId="EBI-10232538">
        <id>Q8WWB5</id>
        <label>PIH1D2</label>
    </interactant>
    <organismsDiffer>false</organismsDiffer>
    <experiments>5</experiments>
</comment>
<comment type="subcellular location">
    <subcellularLocation>
        <location evidence="3">Cytoplasm</location>
    </subcellularLocation>
    <subcellularLocation>
        <location evidence="3">Nucleus</location>
    </subcellularLocation>
</comment>
<comment type="tissue specificity">
    <text evidence="2">Widely expressed with highest expression in thymus.</text>
</comment>
<comment type="similarity">
    <text evidence="9">Belongs to the COMM domain-containing protein 3 family.</text>
</comment>
<accession>Q9UBI1</accession>
<accession>D3DRU7</accession>
<accession>Q5T8Y9</accession>
<gene>
    <name type="primary">COMMD3</name>
    <name type="synonym">BUP</name>
    <name type="synonym">C10orf8</name>
</gene>
<evidence type="ECO:0000255" key="1">
    <source>
        <dbReference type="PROSITE-ProRule" id="PRU00602"/>
    </source>
</evidence>
<evidence type="ECO:0000269" key="2">
    <source>
    </source>
</evidence>
<evidence type="ECO:0000269" key="3">
    <source>
    </source>
</evidence>
<evidence type="ECO:0000269" key="4">
    <source>
    </source>
</evidence>
<evidence type="ECO:0000269" key="5">
    <source>
    </source>
</evidence>
<evidence type="ECO:0000269" key="6">
    <source>
    </source>
</evidence>
<evidence type="ECO:0000269" key="7">
    <source>
    </source>
</evidence>
<evidence type="ECO:0000269" key="8">
    <source>
    </source>
</evidence>
<evidence type="ECO:0000305" key="9"/>
<evidence type="ECO:0000305" key="10">
    <source>
    </source>
</evidence>
<evidence type="ECO:0007744" key="11">
    <source>
        <dbReference type="PDB" id="8F2R"/>
    </source>
</evidence>
<evidence type="ECO:0007744" key="12">
    <source>
        <dbReference type="PDB" id="8F2U"/>
    </source>
</evidence>
<evidence type="ECO:0007744" key="13">
    <source>
        <dbReference type="PDB" id="8P0W"/>
    </source>
</evidence>
<evidence type="ECO:0007829" key="14">
    <source>
        <dbReference type="PDB" id="8P0W"/>
    </source>
</evidence>
<feature type="chain" id="PRO_0000077389" description="COMM domain-containing protein 3">
    <location>
        <begin position="1"/>
        <end position="195"/>
    </location>
</feature>
<feature type="domain" description="COMM" evidence="1">
    <location>
        <begin position="124"/>
        <end position="193"/>
    </location>
</feature>
<feature type="sequence variant" id="VAR_061121" description="In dbSNP:rs11552445.">
    <original>R</original>
    <variation>G</variation>
    <location>
        <position position="18"/>
    </location>
</feature>
<feature type="helix" evidence="14">
    <location>
        <begin position="5"/>
        <end position="14"/>
    </location>
</feature>
<feature type="turn" evidence="14">
    <location>
        <begin position="17"/>
        <end position="19"/>
    </location>
</feature>
<feature type="helix" evidence="14">
    <location>
        <begin position="22"/>
        <end position="37"/>
    </location>
</feature>
<feature type="turn" evidence="14">
    <location>
        <begin position="43"/>
        <end position="46"/>
    </location>
</feature>
<feature type="turn" evidence="14">
    <location>
        <begin position="49"/>
        <end position="53"/>
    </location>
</feature>
<feature type="helix" evidence="14">
    <location>
        <begin position="56"/>
        <end position="75"/>
    </location>
</feature>
<feature type="helix" evidence="14">
    <location>
        <begin position="80"/>
        <end position="89"/>
    </location>
</feature>
<feature type="helix" evidence="14">
    <location>
        <begin position="94"/>
        <end position="116"/>
    </location>
</feature>
<feature type="strand" evidence="14">
    <location>
        <begin position="124"/>
        <end position="138"/>
    </location>
</feature>
<feature type="strand" evidence="14">
    <location>
        <begin position="146"/>
        <end position="155"/>
    </location>
</feature>
<feature type="strand" evidence="14">
    <location>
        <begin position="164"/>
        <end position="170"/>
    </location>
</feature>
<feature type="helix" evidence="14">
    <location>
        <begin position="172"/>
        <end position="193"/>
    </location>
</feature>
<reference key="1">
    <citation type="journal article" date="2005" name="J. Biol. Chem.">
        <title>COMMD proteins, a novel family of structural and functional homologs of MURR1.</title>
        <authorList>
            <person name="Burstein E."/>
            <person name="Hoberg J.E."/>
            <person name="Wilkinson A.S."/>
            <person name="Rumble J.M."/>
            <person name="Csomos R.A."/>
            <person name="Komarck C.M."/>
            <person name="Maine G.N."/>
            <person name="Wilkinson J.C."/>
            <person name="Mayo M.W."/>
            <person name="Duckett C.S."/>
        </authorList>
    </citation>
    <scope>NUCLEOTIDE SEQUENCE [MRNA]</scope>
    <scope>FUNCTION</scope>
    <scope>INTERACTION WITH COMMD1 AND NFKB1</scope>
    <scope>TISSUE SPECIFICITY</scope>
</reference>
<reference key="2">
    <citation type="submission" date="1999-11" db="EMBL/GenBank/DDBJ databases">
        <title>Novel genes expressed in human dendritic cells.</title>
        <authorList>
            <person name="Li Y."/>
            <person name="Li N."/>
            <person name="Tu Y."/>
            <person name="Gu W."/>
            <person name="Wang Y."/>
            <person name="Han Z."/>
            <person name="Chen Z."/>
        </authorList>
    </citation>
    <scope>NUCLEOTIDE SEQUENCE [LARGE SCALE MRNA]</scope>
    <source>
        <tissue>Dendritic cell</tissue>
    </source>
</reference>
<reference key="3">
    <citation type="journal article" date="2000" name="Genome Res.">
        <title>Cloning and functional analysis of cDNAs with open reading frames for 300 previously undefined genes expressed in CD34+ hematopoietic stem/progenitor cells.</title>
        <authorList>
            <person name="Zhang Q.-H."/>
            <person name="Ye M."/>
            <person name="Wu X.-Y."/>
            <person name="Ren S.-X."/>
            <person name="Zhao M."/>
            <person name="Zhao C.-J."/>
            <person name="Fu G."/>
            <person name="Shen Y."/>
            <person name="Fan H.-Y."/>
            <person name="Lu G."/>
            <person name="Zhong M."/>
            <person name="Xu X.-R."/>
            <person name="Han Z.-G."/>
            <person name="Zhang J.-W."/>
            <person name="Tao J."/>
            <person name="Huang Q.-H."/>
            <person name="Zhou J."/>
            <person name="Hu G.-X."/>
            <person name="Gu J."/>
            <person name="Chen S.-J."/>
            <person name="Chen Z."/>
        </authorList>
    </citation>
    <scope>NUCLEOTIDE SEQUENCE [LARGE SCALE MRNA]</scope>
    <source>
        <tissue>Umbilical cord blood</tissue>
    </source>
</reference>
<reference key="4">
    <citation type="journal article" date="2004" name="Nature">
        <title>The DNA sequence and comparative analysis of human chromosome 10.</title>
        <authorList>
            <person name="Deloukas P."/>
            <person name="Earthrowl M.E."/>
            <person name="Grafham D.V."/>
            <person name="Rubenfield M."/>
            <person name="French L."/>
            <person name="Steward C.A."/>
            <person name="Sims S.K."/>
            <person name="Jones M.C."/>
            <person name="Searle S."/>
            <person name="Scott C."/>
            <person name="Howe K."/>
            <person name="Hunt S.E."/>
            <person name="Andrews T.D."/>
            <person name="Gilbert J.G.R."/>
            <person name="Swarbreck D."/>
            <person name="Ashurst J.L."/>
            <person name="Taylor A."/>
            <person name="Battles J."/>
            <person name="Bird C.P."/>
            <person name="Ainscough R."/>
            <person name="Almeida J.P."/>
            <person name="Ashwell R.I.S."/>
            <person name="Ambrose K.D."/>
            <person name="Babbage A.K."/>
            <person name="Bagguley C.L."/>
            <person name="Bailey J."/>
            <person name="Banerjee R."/>
            <person name="Bates K."/>
            <person name="Beasley H."/>
            <person name="Bray-Allen S."/>
            <person name="Brown A.J."/>
            <person name="Brown J.Y."/>
            <person name="Burford D.C."/>
            <person name="Burrill W."/>
            <person name="Burton J."/>
            <person name="Cahill P."/>
            <person name="Camire D."/>
            <person name="Carter N.P."/>
            <person name="Chapman J.C."/>
            <person name="Clark S.Y."/>
            <person name="Clarke G."/>
            <person name="Clee C.M."/>
            <person name="Clegg S."/>
            <person name="Corby N."/>
            <person name="Coulson A."/>
            <person name="Dhami P."/>
            <person name="Dutta I."/>
            <person name="Dunn M."/>
            <person name="Faulkner L."/>
            <person name="Frankish A."/>
            <person name="Frankland J.A."/>
            <person name="Garner P."/>
            <person name="Garnett J."/>
            <person name="Gribble S."/>
            <person name="Griffiths C."/>
            <person name="Grocock R."/>
            <person name="Gustafson E."/>
            <person name="Hammond S."/>
            <person name="Harley J.L."/>
            <person name="Hart E."/>
            <person name="Heath P.D."/>
            <person name="Ho T.P."/>
            <person name="Hopkins B."/>
            <person name="Horne J."/>
            <person name="Howden P.J."/>
            <person name="Huckle E."/>
            <person name="Hynds C."/>
            <person name="Johnson C."/>
            <person name="Johnson D."/>
            <person name="Kana A."/>
            <person name="Kay M."/>
            <person name="Kimberley A.M."/>
            <person name="Kershaw J.K."/>
            <person name="Kokkinaki M."/>
            <person name="Laird G.K."/>
            <person name="Lawlor S."/>
            <person name="Lee H.M."/>
            <person name="Leongamornlert D.A."/>
            <person name="Laird G."/>
            <person name="Lloyd C."/>
            <person name="Lloyd D.M."/>
            <person name="Loveland J."/>
            <person name="Lovell J."/>
            <person name="McLaren S."/>
            <person name="McLay K.E."/>
            <person name="McMurray A."/>
            <person name="Mashreghi-Mohammadi M."/>
            <person name="Matthews L."/>
            <person name="Milne S."/>
            <person name="Nickerson T."/>
            <person name="Nguyen M."/>
            <person name="Overton-Larty E."/>
            <person name="Palmer S.A."/>
            <person name="Pearce A.V."/>
            <person name="Peck A.I."/>
            <person name="Pelan S."/>
            <person name="Phillimore B."/>
            <person name="Porter K."/>
            <person name="Rice C.M."/>
            <person name="Rogosin A."/>
            <person name="Ross M.T."/>
            <person name="Sarafidou T."/>
            <person name="Sehra H.K."/>
            <person name="Shownkeen R."/>
            <person name="Skuce C.D."/>
            <person name="Smith M."/>
            <person name="Standring L."/>
            <person name="Sycamore N."/>
            <person name="Tester J."/>
            <person name="Thorpe A."/>
            <person name="Torcasso W."/>
            <person name="Tracey A."/>
            <person name="Tromans A."/>
            <person name="Tsolas J."/>
            <person name="Wall M."/>
            <person name="Walsh J."/>
            <person name="Wang H."/>
            <person name="Weinstock K."/>
            <person name="West A.P."/>
            <person name="Willey D.L."/>
            <person name="Whitehead S.L."/>
            <person name="Wilming L."/>
            <person name="Wray P.W."/>
            <person name="Young L."/>
            <person name="Chen Y."/>
            <person name="Lovering R.C."/>
            <person name="Moschonas N.K."/>
            <person name="Siebert R."/>
            <person name="Fechtel K."/>
            <person name="Bentley D."/>
            <person name="Durbin R.M."/>
            <person name="Hubbard T."/>
            <person name="Doucette-Stamm L."/>
            <person name="Beck S."/>
            <person name="Smith D.R."/>
            <person name="Rogers J."/>
        </authorList>
    </citation>
    <scope>NUCLEOTIDE SEQUENCE [LARGE SCALE GENOMIC DNA]</scope>
</reference>
<reference key="5">
    <citation type="submission" date="2005-09" db="EMBL/GenBank/DDBJ databases">
        <authorList>
            <person name="Mural R.J."/>
            <person name="Istrail S."/>
            <person name="Sutton G.G."/>
            <person name="Florea L."/>
            <person name="Halpern A.L."/>
            <person name="Mobarry C.M."/>
            <person name="Lippert R."/>
            <person name="Walenz B."/>
            <person name="Shatkay H."/>
            <person name="Dew I."/>
            <person name="Miller J.R."/>
            <person name="Flanigan M.J."/>
            <person name="Edwards N.J."/>
            <person name="Bolanos R."/>
            <person name="Fasulo D."/>
            <person name="Halldorsson B.V."/>
            <person name="Hannenhalli S."/>
            <person name="Turner R."/>
            <person name="Yooseph S."/>
            <person name="Lu F."/>
            <person name="Nusskern D.R."/>
            <person name="Shue B.C."/>
            <person name="Zheng X.H."/>
            <person name="Zhong F."/>
            <person name="Delcher A.L."/>
            <person name="Huson D.H."/>
            <person name="Kravitz S.A."/>
            <person name="Mouchard L."/>
            <person name="Reinert K."/>
            <person name="Remington K.A."/>
            <person name="Clark A.G."/>
            <person name="Waterman M.S."/>
            <person name="Eichler E.E."/>
            <person name="Adams M.D."/>
            <person name="Hunkapiller M.W."/>
            <person name="Myers E.W."/>
            <person name="Venter J.C."/>
        </authorList>
    </citation>
    <scope>NUCLEOTIDE SEQUENCE [LARGE SCALE GENOMIC DNA]</scope>
</reference>
<reference key="6">
    <citation type="journal article" date="2004" name="Genome Res.">
        <title>The status, quality, and expansion of the NIH full-length cDNA project: the Mammalian Gene Collection (MGC).</title>
        <authorList>
            <consortium name="The MGC Project Team"/>
        </authorList>
    </citation>
    <scope>NUCLEOTIDE SEQUENCE [LARGE SCALE MRNA]</scope>
    <source>
        <tissue>Muscle</tissue>
    </source>
</reference>
<reference key="7">
    <citation type="journal article" date="2011" name="BMC Syst. Biol.">
        <title>Initial characterization of the human central proteome.</title>
        <authorList>
            <person name="Burkard T.R."/>
            <person name="Planyavsky M."/>
            <person name="Kaupe I."/>
            <person name="Breitwieser F.P."/>
            <person name="Buerckstuemmer T."/>
            <person name="Bennett K.L."/>
            <person name="Superti-Furga G."/>
            <person name="Colinge J."/>
        </authorList>
    </citation>
    <scope>IDENTIFICATION BY MASS SPECTROMETRY [LARGE SCALE ANALYSIS]</scope>
</reference>
<reference key="8">
    <citation type="journal article" date="2011" name="J. Biol. Chem.">
        <title>COMMD1 (copper metabolism MURR1 domain-containing protein 1) regulates Cullin RING ligases by preventing CAND1 (Cullin-associated Nedd8-dissociated protein 1) binding.</title>
        <authorList>
            <person name="Mao X."/>
            <person name="Gluck N."/>
            <person name="Chen B."/>
            <person name="Starokadomskyy P."/>
            <person name="Li H."/>
            <person name="Maine G.N."/>
            <person name="Burstein E."/>
        </authorList>
    </citation>
    <scope>FUNCTION</scope>
    <scope>INTERACTION WITH CUL3; CUL4A; CUL4B AND CUL5</scope>
    <scope>SUBCELLULAR LOCATION</scope>
</reference>
<reference key="9">
    <citation type="journal article" date="2013" name="Am. J. Physiol.">
        <title>Functional interaction of COMMD3 and COMMD9 with the epithelial sodium channel.</title>
        <authorList>
            <person name="Liu Y.F."/>
            <person name="Swart M."/>
            <person name="Ke Y."/>
            <person name="Ly K."/>
            <person name="McDonald F.J."/>
        </authorList>
    </citation>
    <scope>FUNCTION</scope>
    <scope>INTERACTION WITH SCNN1B</scope>
</reference>
<reference key="10">
    <citation type="journal article" date="2013" name="J. Clin. Invest.">
        <title>CCDC22 deficiency in humans blunts activation of proinflammatory NF-kappaB signaling.</title>
        <authorList>
            <person name="Starokadomskyy P."/>
            <person name="Gluck N."/>
            <person name="Li H."/>
            <person name="Chen B."/>
            <person name="Wallis M."/>
            <person name="Maine G.N."/>
            <person name="Mao X."/>
            <person name="Zaidi I.W."/>
            <person name="Hein M.Y."/>
            <person name="McDonald F.J."/>
            <person name="Lenzner S."/>
            <person name="Zecha A."/>
            <person name="Ropers H.H."/>
            <person name="Kuss A.W."/>
            <person name="McGaughran J."/>
            <person name="Gecz J."/>
            <person name="Burstein E."/>
        </authorList>
    </citation>
    <scope>INTERACTION WITH CCDC22</scope>
</reference>
<reference key="11">
    <citation type="journal article" date="2015" name="Mol. Biol. Cell">
        <title>COMMD1 is linked to the WASH complex and regulates endosomal trafficking of the copper transporter ATP7A.</title>
        <authorList>
            <person name="Phillips-Krawczak C.A."/>
            <person name="Singla A."/>
            <person name="Starokadomskyy P."/>
            <person name="Deng Z."/>
            <person name="Osborne D.G."/>
            <person name="Li H."/>
            <person name="Dick C.J."/>
            <person name="Gomez T.S."/>
            <person name="Koenecke M."/>
            <person name="Zhang J.S."/>
            <person name="Dai H."/>
            <person name="Sifuentes-Dominguez L.F."/>
            <person name="Geng L.N."/>
            <person name="Kaufmann S.H."/>
            <person name="Hein M.Y."/>
            <person name="Wallis M."/>
            <person name="McGaughran J."/>
            <person name="Gecz J."/>
            <person name="van de Sluis B."/>
            <person name="Billadeau D.D."/>
            <person name="Burstein E."/>
        </authorList>
    </citation>
    <scope>INTERACTION WITH CCDC93</scope>
</reference>
<reference key="12">
    <citation type="journal article" date="2015" name="Proteomics">
        <title>N-terminome analysis of the human mitochondrial proteome.</title>
        <authorList>
            <person name="Vaca Jacome A.S."/>
            <person name="Rabilloud T."/>
            <person name="Schaeffer-Reiss C."/>
            <person name="Rompais M."/>
            <person name="Ayoub D."/>
            <person name="Lane L."/>
            <person name="Bairoch A."/>
            <person name="Van Dorsselaer A."/>
            <person name="Carapito C."/>
        </authorList>
    </citation>
    <scope>IDENTIFICATION BY MASS SPECTROMETRY [LARGE SCALE ANALYSIS]</scope>
</reference>
<reference evidence="11 12" key="13">
    <citation type="journal article" date="2023" name="Cell">
        <title>Structure of the endosomal commander complex linked to Ritscher-Schinzel syndrome.</title>
        <authorList>
            <person name="Healy M.D."/>
            <person name="McNally K.E."/>
            <person name="Butkovic R."/>
            <person name="Chilton M."/>
            <person name="Kato K."/>
            <person name="Sacharz J."/>
            <person name="McConville C."/>
            <person name="Moody E.R.R."/>
            <person name="Shaw S."/>
            <person name="Planelles-Herrero V.J."/>
            <person name="Yadav S.K.N."/>
            <person name="Ross J."/>
            <person name="Borucu U."/>
            <person name="Palmer C.S."/>
            <person name="Chen K.E."/>
            <person name="Croll T.I."/>
            <person name="Hall R.J."/>
            <person name="Caruana N.J."/>
            <person name="Ghai R."/>
            <person name="Nguyen T.H.D."/>
            <person name="Heesom K.J."/>
            <person name="Saitoh S."/>
            <person name="Berger I."/>
            <person name="Schaffitzel C."/>
            <person name="Williams T.A."/>
            <person name="Stroud D.A."/>
            <person name="Derivery E."/>
            <person name="Collins B.M."/>
            <person name="Cullen P.J."/>
        </authorList>
    </citation>
    <scope>STRUCTURE BY ELECTRON MICROSCOPY (3.12 ANGSTROMS) OF THE CCC COMPLEX</scope>
    <scope>FUNCTION</scope>
    <scope>SUBUNIT</scope>
</reference>
<reference evidence="13" key="14">
    <citation type="journal article" date="2024" name="Nat. Struct. Mol. Biol.">
        <title>Structure and interactions of the endogenous human commander complex.</title>
        <authorList>
            <person name="Laulumaa S."/>
            <person name="Kumpula E.P."/>
            <person name="Huiskonen J.T."/>
            <person name="Varjosalo M."/>
        </authorList>
    </citation>
    <scope>STRUCTURE BY ELECTRON MICROSCOPY (2.90 ANGSTROMS) OF THE CCC COMPLEX</scope>
    <scope>FUNCTION</scope>
    <scope>SUBUNIT</scope>
</reference>
<sequence length="195" mass="22151">MELSESVQKGFQMLADPRSFDSNAFTLLLRAAFQSLLDAQADEAVLDHPDLKHIDPVVLKHCHAAAATYILEAGKHRADKSTLSTYLEDCKFDRERIELFCTEYQNNKNSLEILLGSIGRSLPHITDVSWRLEYQIKTNQLHRMYRPAYLVTLSVQNTDSPSYPEISFSCSMEQLQDLVGKLKDASKSLERATQL</sequence>
<proteinExistence type="evidence at protein level"/>
<protein>
    <recommendedName>
        <fullName>COMM domain-containing protein 3</fullName>
    </recommendedName>
    <alternativeName>
        <fullName>Protein Bup</fullName>
    </alternativeName>
    <alternativeName>
        <fullName>Protein PIL</fullName>
    </alternativeName>
</protein>
<keyword id="KW-0002">3D-structure</keyword>
<keyword id="KW-0963">Cytoplasm</keyword>
<keyword id="KW-0406">Ion transport</keyword>
<keyword id="KW-0539">Nucleus</keyword>
<keyword id="KW-1267">Proteomics identification</keyword>
<keyword id="KW-1185">Reference proteome</keyword>
<keyword id="KW-0915">Sodium</keyword>
<keyword id="KW-0739">Sodium transport</keyword>
<keyword id="KW-0804">Transcription</keyword>
<keyword id="KW-0805">Transcription regulation</keyword>
<keyword id="KW-0813">Transport</keyword>
<keyword id="KW-0833">Ubl conjugation pathway</keyword>
<name>COMD3_HUMAN</name>
<organism>
    <name type="scientific">Homo sapiens</name>
    <name type="common">Human</name>
    <dbReference type="NCBI Taxonomy" id="9606"/>
    <lineage>
        <taxon>Eukaryota</taxon>
        <taxon>Metazoa</taxon>
        <taxon>Chordata</taxon>
        <taxon>Craniata</taxon>
        <taxon>Vertebrata</taxon>
        <taxon>Euteleostomi</taxon>
        <taxon>Mammalia</taxon>
        <taxon>Eutheria</taxon>
        <taxon>Euarchontoglires</taxon>
        <taxon>Primates</taxon>
        <taxon>Haplorrhini</taxon>
        <taxon>Catarrhini</taxon>
        <taxon>Hominidae</taxon>
        <taxon>Homo</taxon>
    </lineage>
</organism>
<dbReference type="EMBL" id="AY542159">
    <property type="protein sequence ID" value="AAS22241.1"/>
    <property type="molecule type" value="mRNA"/>
</dbReference>
<dbReference type="EMBL" id="AF201948">
    <property type="protein sequence ID" value="AAF17240.1"/>
    <property type="molecule type" value="mRNA"/>
</dbReference>
<dbReference type="EMBL" id="AF078848">
    <property type="protein sequence ID" value="AAD44480.1"/>
    <property type="molecule type" value="mRNA"/>
</dbReference>
<dbReference type="EMBL" id="AL158211">
    <property type="status" value="NOT_ANNOTATED_CDS"/>
    <property type="molecule type" value="Genomic_DNA"/>
</dbReference>
<dbReference type="EMBL" id="CH471072">
    <property type="protein sequence ID" value="EAW86149.1"/>
    <property type="molecule type" value="Genomic_DNA"/>
</dbReference>
<dbReference type="EMBL" id="CH471072">
    <property type="protein sequence ID" value="EAW86155.1"/>
    <property type="molecule type" value="Genomic_DNA"/>
</dbReference>
<dbReference type="EMBL" id="BC022898">
    <property type="protein sequence ID" value="AAH22898.1"/>
    <property type="molecule type" value="mRNA"/>
</dbReference>
<dbReference type="CCDS" id="CCDS7137.1"/>
<dbReference type="RefSeq" id="NP_036203.1">
    <property type="nucleotide sequence ID" value="NM_012071.4"/>
</dbReference>
<dbReference type="PDB" id="8F2R">
    <property type="method" value="EM"/>
    <property type="resolution" value="3.12 A"/>
    <property type="chains" value="C=1-195"/>
</dbReference>
<dbReference type="PDB" id="8F2U">
    <property type="method" value="EM"/>
    <property type="resolution" value="3.53 A"/>
    <property type="chains" value="C=1-195"/>
</dbReference>
<dbReference type="PDB" id="8P0W">
    <property type="method" value="EM"/>
    <property type="resolution" value="2.90 A"/>
    <property type="chains" value="C=1-195"/>
</dbReference>
<dbReference type="PDBsum" id="8F2R"/>
<dbReference type="PDBsum" id="8F2U"/>
<dbReference type="PDBsum" id="8P0W"/>
<dbReference type="EMDB" id="EMD-17340"/>
<dbReference type="EMDB" id="EMD-17342"/>
<dbReference type="EMDB" id="EMD-28825"/>
<dbReference type="EMDB" id="EMD-28827"/>
<dbReference type="SMR" id="Q9UBI1"/>
<dbReference type="BioGRID" id="116984">
    <property type="interactions" value="82"/>
</dbReference>
<dbReference type="ComplexPortal" id="CPX-2211">
    <property type="entry name" value="Commander complex"/>
</dbReference>
<dbReference type="CORUM" id="Q9UBI1"/>
<dbReference type="FunCoup" id="Q9UBI1">
    <property type="interactions" value="684"/>
</dbReference>
<dbReference type="IntAct" id="Q9UBI1">
    <property type="interactions" value="65"/>
</dbReference>
<dbReference type="MINT" id="Q9UBI1"/>
<dbReference type="STRING" id="9606.ENSP00000366032"/>
<dbReference type="GlyGen" id="Q9UBI1">
    <property type="glycosylation" value="1 site, 1 O-linked glycan (1 site)"/>
</dbReference>
<dbReference type="iPTMnet" id="Q9UBI1"/>
<dbReference type="MetOSite" id="Q9UBI1"/>
<dbReference type="PhosphoSitePlus" id="Q9UBI1"/>
<dbReference type="BioMuta" id="COMMD3"/>
<dbReference type="DMDM" id="51316114"/>
<dbReference type="jPOST" id="Q9UBI1"/>
<dbReference type="MassIVE" id="Q9UBI1"/>
<dbReference type="PaxDb" id="9606-ENSP00000366032"/>
<dbReference type="PeptideAtlas" id="Q9UBI1"/>
<dbReference type="ProteomicsDB" id="83972"/>
<dbReference type="Pumba" id="Q9UBI1"/>
<dbReference type="TopDownProteomics" id="Q9UBI1"/>
<dbReference type="Antibodypedia" id="25612">
    <property type="antibodies" value="86 antibodies from 16 providers"/>
</dbReference>
<dbReference type="DNASU" id="23412"/>
<dbReference type="Ensembl" id="ENST00000376836.8">
    <property type="protein sequence ID" value="ENSP00000366032.3"/>
    <property type="gene ID" value="ENSG00000148444.16"/>
</dbReference>
<dbReference type="GeneID" id="23412"/>
<dbReference type="KEGG" id="hsa:23412"/>
<dbReference type="MANE-Select" id="ENST00000376836.8">
    <property type="protein sequence ID" value="ENSP00000366032.3"/>
    <property type="RefSeq nucleotide sequence ID" value="NM_012071.4"/>
    <property type="RefSeq protein sequence ID" value="NP_036203.1"/>
</dbReference>
<dbReference type="UCSC" id="uc001irf.4">
    <property type="organism name" value="human"/>
</dbReference>
<dbReference type="AGR" id="HGNC:23332"/>
<dbReference type="CTD" id="23412"/>
<dbReference type="DisGeNET" id="23412"/>
<dbReference type="GeneCards" id="COMMD3"/>
<dbReference type="HGNC" id="HGNC:23332">
    <property type="gene designation" value="COMMD3"/>
</dbReference>
<dbReference type="HPA" id="ENSG00000148444">
    <property type="expression patterns" value="Low tissue specificity"/>
</dbReference>
<dbReference type="MIM" id="616700">
    <property type="type" value="gene"/>
</dbReference>
<dbReference type="neXtProt" id="NX_Q9UBI1"/>
<dbReference type="OpenTargets" id="ENSG00000148444"/>
<dbReference type="PharmGKB" id="PA134864927"/>
<dbReference type="VEuPathDB" id="HostDB:ENSG00000148444"/>
<dbReference type="eggNOG" id="ENOG502R79J">
    <property type="taxonomic scope" value="Eukaryota"/>
</dbReference>
<dbReference type="GeneTree" id="ENSGT00390000015971"/>
<dbReference type="InParanoid" id="Q9UBI1"/>
<dbReference type="OMA" id="DWRLDYC"/>
<dbReference type="OrthoDB" id="1917519at2759"/>
<dbReference type="PAN-GO" id="Q9UBI1">
    <property type="GO annotations" value="0 GO annotations based on evolutionary models"/>
</dbReference>
<dbReference type="PhylomeDB" id="Q9UBI1"/>
<dbReference type="TreeFam" id="TF329267"/>
<dbReference type="PathwayCommons" id="Q9UBI1"/>
<dbReference type="Reactome" id="R-HSA-6798695">
    <property type="pathway name" value="Neutrophil degranulation"/>
</dbReference>
<dbReference type="Reactome" id="R-HSA-8951664">
    <property type="pathway name" value="Neddylation"/>
</dbReference>
<dbReference type="SignaLink" id="Q9UBI1"/>
<dbReference type="BioGRID-ORCS" id="23412">
    <property type="hits" value="133 hits in 1124 CRISPR screens"/>
</dbReference>
<dbReference type="GenomeRNAi" id="23412"/>
<dbReference type="Pharos" id="Q9UBI1">
    <property type="development level" value="Tbio"/>
</dbReference>
<dbReference type="PRO" id="PR:Q9UBI1"/>
<dbReference type="Proteomes" id="UP000005640">
    <property type="component" value="Chromosome 10"/>
</dbReference>
<dbReference type="RNAct" id="Q9UBI1">
    <property type="molecule type" value="protein"/>
</dbReference>
<dbReference type="Bgee" id="ENSG00000148444">
    <property type="expression patterns" value="Expressed in diaphragm and 203 other cell types or tissues"/>
</dbReference>
<dbReference type="ExpressionAtlas" id="Q9UBI1">
    <property type="expression patterns" value="baseline and differential"/>
</dbReference>
<dbReference type="GO" id="GO:0005576">
    <property type="term" value="C:extracellular region"/>
    <property type="evidence" value="ECO:0000304"/>
    <property type="project" value="Reactome"/>
</dbReference>
<dbReference type="GO" id="GO:1904813">
    <property type="term" value="C:ficolin-1-rich granule lumen"/>
    <property type="evidence" value="ECO:0000304"/>
    <property type="project" value="Reactome"/>
</dbReference>
<dbReference type="GO" id="GO:0005634">
    <property type="term" value="C:nucleus"/>
    <property type="evidence" value="ECO:0007669"/>
    <property type="project" value="UniProtKB-SubCell"/>
</dbReference>
<dbReference type="GO" id="GO:0006814">
    <property type="term" value="P:sodium ion transport"/>
    <property type="evidence" value="ECO:0007669"/>
    <property type="project" value="UniProtKB-KW"/>
</dbReference>
<dbReference type="CDD" id="cd04751">
    <property type="entry name" value="Commd3"/>
    <property type="match status" value="1"/>
</dbReference>
<dbReference type="InterPro" id="IPR017920">
    <property type="entry name" value="COMM"/>
</dbReference>
<dbReference type="InterPro" id="IPR037355">
    <property type="entry name" value="COMMD3"/>
</dbReference>
<dbReference type="PANTHER" id="PTHR31159">
    <property type="entry name" value="COMM DOMAIN-CONTAINING PROTEIN 3"/>
    <property type="match status" value="1"/>
</dbReference>
<dbReference type="PANTHER" id="PTHR31159:SF1">
    <property type="entry name" value="COMM DOMAIN-CONTAINING PROTEIN 3"/>
    <property type="match status" value="1"/>
</dbReference>
<dbReference type="Pfam" id="PF07258">
    <property type="entry name" value="COMM_domain"/>
    <property type="match status" value="1"/>
</dbReference>
<dbReference type="Pfam" id="PF21672">
    <property type="entry name" value="COMM_HN"/>
    <property type="match status" value="1"/>
</dbReference>
<dbReference type="PROSITE" id="PS51269">
    <property type="entry name" value="COMM"/>
    <property type="match status" value="1"/>
</dbReference>